<protein>
    <recommendedName>
        <fullName evidence="1 3">Probable inorganic carbon transporter subunit DabA1</fullName>
    </recommendedName>
</protein>
<name>DABA1_HALNC</name>
<comment type="function">
    <text evidence="1 4">Part of an energy-coupled inorganic carbon pump.</text>
</comment>
<comment type="cofactor">
    <cofactor evidence="1">
        <name>Zn(2+)</name>
        <dbReference type="ChEBI" id="CHEBI:29105"/>
    </cofactor>
</comment>
<comment type="subunit">
    <text evidence="1">Forms a complex with DabB1.</text>
</comment>
<comment type="subcellular location">
    <subcellularLocation>
        <location evidence="1">Cell inner membrane</location>
        <topology evidence="1">Peripheral membrane protein</topology>
    </subcellularLocation>
</comment>
<comment type="disruption phenotype">
    <text evidence="2">Required for growth in ambient air.</text>
</comment>
<comment type="similarity">
    <text evidence="1">Belongs to the inorganic carbon transporter (TC 9.A.2) DabA family.</text>
</comment>
<accession>D0KZ77</accession>
<proteinExistence type="inferred from homology"/>
<gene>
    <name evidence="1 3" type="primary">dabA1</name>
    <name evidence="5" type="ordered locus">Hneap_0907</name>
</gene>
<dbReference type="EMBL" id="CP001801">
    <property type="protein sequence ID" value="ACX95750.1"/>
    <property type="molecule type" value="Genomic_DNA"/>
</dbReference>
<dbReference type="RefSeq" id="WP_012823786.1">
    <property type="nucleotide sequence ID" value="NC_013422.1"/>
</dbReference>
<dbReference type="STRING" id="555778.Hneap_0907"/>
<dbReference type="KEGG" id="hna:Hneap_0907"/>
<dbReference type="eggNOG" id="COG3002">
    <property type="taxonomic scope" value="Bacteria"/>
</dbReference>
<dbReference type="HOGENOM" id="CLU_009885_0_0_6"/>
<dbReference type="Proteomes" id="UP000009102">
    <property type="component" value="Chromosome"/>
</dbReference>
<dbReference type="GO" id="GO:0005886">
    <property type="term" value="C:plasma membrane"/>
    <property type="evidence" value="ECO:0007669"/>
    <property type="project" value="UniProtKB-SubCell"/>
</dbReference>
<dbReference type="GO" id="GO:0008270">
    <property type="term" value="F:zinc ion binding"/>
    <property type="evidence" value="ECO:0007669"/>
    <property type="project" value="UniProtKB-UniRule"/>
</dbReference>
<dbReference type="HAMAP" id="MF_01871">
    <property type="entry name" value="DabA"/>
    <property type="match status" value="1"/>
</dbReference>
<dbReference type="InterPro" id="IPR018752">
    <property type="entry name" value="DabA"/>
</dbReference>
<dbReference type="PANTHER" id="PTHR38344:SF1">
    <property type="entry name" value="INORGANIC CARBON TRANSPORTER SUBUNIT DABA-RELATED"/>
    <property type="match status" value="1"/>
</dbReference>
<dbReference type="PANTHER" id="PTHR38344">
    <property type="entry name" value="UPF0753 PROTEIN AQ_863"/>
    <property type="match status" value="1"/>
</dbReference>
<dbReference type="Pfam" id="PF10070">
    <property type="entry name" value="DabA"/>
    <property type="match status" value="1"/>
</dbReference>
<feature type="chain" id="PRO_0000453153" description="Probable inorganic carbon transporter subunit DabA1">
    <location>
        <begin position="1"/>
        <end position="1046"/>
    </location>
</feature>
<feature type="binding site" evidence="1">
    <location>
        <position position="462"/>
    </location>
    <ligand>
        <name>Zn(2+)</name>
        <dbReference type="ChEBI" id="CHEBI:29105"/>
    </ligand>
</feature>
<feature type="binding site" evidence="1">
    <location>
        <position position="464"/>
    </location>
    <ligand>
        <name>Zn(2+)</name>
        <dbReference type="ChEBI" id="CHEBI:29105"/>
    </ligand>
</feature>
<feature type="binding site" evidence="1">
    <location>
        <position position="721"/>
    </location>
    <ligand>
        <name>Zn(2+)</name>
        <dbReference type="ChEBI" id="CHEBI:29105"/>
    </ligand>
</feature>
<feature type="binding site" evidence="1">
    <location>
        <position position="736"/>
    </location>
    <ligand>
        <name>Zn(2+)</name>
        <dbReference type="ChEBI" id="CHEBI:29105"/>
    </ligand>
</feature>
<reference key="1">
    <citation type="submission" date="2009-10" db="EMBL/GenBank/DDBJ databases">
        <title>Complete sequence of Halothiobacillus neapolitanus c2.</title>
        <authorList>
            <consortium name="US DOE Joint Genome Institute"/>
            <person name="Lucas S."/>
            <person name="Copeland A."/>
            <person name="Lapidus A."/>
            <person name="Glavina del Rio T."/>
            <person name="Tice H."/>
            <person name="Bruce D."/>
            <person name="Goodwin L."/>
            <person name="Pitluck S."/>
            <person name="Davenport K."/>
            <person name="Brettin T."/>
            <person name="Detter J.C."/>
            <person name="Han C."/>
            <person name="Tapia R."/>
            <person name="Larimer F."/>
            <person name="Land M."/>
            <person name="Hauser L."/>
            <person name="Kyrpides N."/>
            <person name="Mikhailova N."/>
            <person name="Kerfeld C."/>
            <person name="Cannon G."/>
            <person name="Heinhort S."/>
        </authorList>
    </citation>
    <scope>NUCLEOTIDE SEQUENCE [LARGE SCALE GENOMIC DNA]</scope>
    <source>
        <strain>ATCC 23641 / c2</strain>
    </source>
</reference>
<reference key="2">
    <citation type="journal article" date="2019" name="Nat. Microbiol.">
        <title>DABs are inorganic carbon pumps found throughout prokaryotic phyla.</title>
        <authorList>
            <person name="Desmarais J.J."/>
            <person name="Flamholz A.I."/>
            <person name="Blikstad C."/>
            <person name="Dugan E.J."/>
            <person name="Laughlin T.G."/>
            <person name="Oltrogge L.M."/>
            <person name="Chen A.W."/>
            <person name="Wetmore K."/>
            <person name="Diamond S."/>
            <person name="Wang J.Y."/>
            <person name="Savage D.F."/>
        </authorList>
    </citation>
    <scope>FUNCTION</scope>
    <scope>DISRUPTION PHENOTYPE</scope>
    <source>
        <strain>ATCC 23641 / c2</strain>
    </source>
</reference>
<evidence type="ECO:0000255" key="1">
    <source>
        <dbReference type="HAMAP-Rule" id="MF_01871"/>
    </source>
</evidence>
<evidence type="ECO:0000269" key="2">
    <source>
    </source>
</evidence>
<evidence type="ECO:0000303" key="3">
    <source>
    </source>
</evidence>
<evidence type="ECO:0000305" key="4">
    <source>
    </source>
</evidence>
<evidence type="ECO:0000312" key="5">
    <source>
        <dbReference type="EMBL" id="ACX95750.1"/>
    </source>
</evidence>
<keyword id="KW-0997">Cell inner membrane</keyword>
<keyword id="KW-1003">Cell membrane</keyword>
<keyword id="KW-0472">Membrane</keyword>
<keyword id="KW-0479">Metal-binding</keyword>
<keyword id="KW-1185">Reference proteome</keyword>
<keyword id="KW-0813">Transport</keyword>
<keyword id="KW-0862">Zinc</keyword>
<organism>
    <name type="scientific">Halothiobacillus neapolitanus (strain ATCC 23641 / c2)</name>
    <name type="common">Thiobacillus neapolitanus</name>
    <dbReference type="NCBI Taxonomy" id="555778"/>
    <lineage>
        <taxon>Bacteria</taxon>
        <taxon>Pseudomonadati</taxon>
        <taxon>Pseudomonadota</taxon>
        <taxon>Gammaproteobacteria</taxon>
        <taxon>Chromatiales</taxon>
        <taxon>Halothiobacillaceae</taxon>
        <taxon>Halothiobacillus</taxon>
    </lineage>
</organism>
<sequence length="1046" mass="118414">MSKLPLGKRLKIRSMVHMAAEPIPNFWPMRTFIHHNPLHGLEHLPFEQAVRQGEKLFHARGFLPREDYQRYHKEGRVDQNSIKRDIADFISKQETLNGLDLASLLSDLMCSVKNKVTRTRALADHDDVFQALHGKQLENAEALDLKALTQRLCAQFAPERPLYEAIDLLFGTQMGTTLDELVIKSCLDFFDEGQSTIQMPGRHQGLFAAWTALAKRNLRLFLRGMHIKQILDQDDTPEGIIAYILDELGIEEAHWDGLITRELTRLHGWAGFIRWRSSSKHYYWAEQYPGDLIDFLAIRLVLGLALIREHSRQKRTPMTVKVLQEYIEGHTAECYLRQAYYGGCILPAFAHDVDDALSHKKPQRINNILPGYLRQQRQFEATRQADALRDLASKAGQTDALMALNAPQIKQLMTLIEAFENEEGMIWLRAMESVYRREIINQIQLYAPHKKEKRPFAQALFCIDVRSEPIRRNLETVGEYQTYGIAGFFGVPVSYIGLGKGSEVNLCPVVITPKNLVLEVPVGATSIETDFYSSADHVLHEMKSSILSPYFTVEAAGLLFGFDMIGKTIAPRRYTQIRNHIEPKAQATRLLVDKLTREQADSIVRSLQRAMIVRAIHQEFGIEREAVTDAMIRELREAAMDNYHEQTEFARRFALSPTAETQFIAGLKKDYKINRSFVSMQMERLARIGFSLDEQVFYVDKALTSIGLTENFSRFVLLAGHGSTSDNNPYESALDCGACGGSHGLVSARVLAHMANKPEVRRRLAKQGIQIPEDTWFVSVMHNTTTDQLSLQDLDLLPNSHLVYLERLRNGLRAATRLSAAERLPALLDHPSPNIDTLSAQKQIERNASDWTQVRPEWGLARNASVVAGGRHLTEGANLSGRTFLQSYDYRLDPKGRHLENILSNPLIIGQWINLEHYFSAVDNEHFGSGSKAYHNVVGRFGVVTGNLSDLRTGLPAQSVLKDGRPYHEPIRLLAIIEAPAAFTLEVAGRLPKVMSLITNGWITVVVVDPETGDRLFYDRGEWYNLNNDPQYTPSVKPLLEEELSA</sequence>